<sequence length="398" mass="44994">MSSLSRVLRGTFNTCPIRRFSSAATVVSEPTAVTAAISPPQKSLTSLVNGERNPKRIVEKFKKACESERFRTNIAVYDRTVRRLVAAKRLHYVEEILEEQKKYRDMSKEGFAARIISLYGKAGMFENAQKVFEEMPNRDCKRSVLSFNALLSAYRLSKKFDVVEELFNELPGKLSIKPDIVSYNTLIKALCEKDSLPEAVALLDEIENKGLKPDIVTFNTLLLSSYLKGQFELGEEIWAKMVEKNVAIDIRTYNARLLGLANEAKSKELVNLFGELKASGLKPDVFSFNAMIRGSINEGKMDEAEAWYKEIVKHGYRPDKATFALLLPAMCKAGDFESAIELFKETFSKRYLVGQTTLQQLVDELVKGSKREEAEEIVKIAKTNDFLKLKLNLPSQEE</sequence>
<dbReference type="EMBL" id="AC002304">
    <property type="protein sequence ID" value="AAF79315.1"/>
    <property type="molecule type" value="Genomic_DNA"/>
</dbReference>
<dbReference type="EMBL" id="CP002684">
    <property type="protein sequence ID" value="AEE33315.1"/>
    <property type="molecule type" value="Genomic_DNA"/>
</dbReference>
<dbReference type="EMBL" id="AY074876">
    <property type="protein sequence ID" value="AAL75896.1"/>
    <property type="molecule type" value="mRNA"/>
</dbReference>
<dbReference type="EMBL" id="BT015869">
    <property type="protein sequence ID" value="AAU94432.1"/>
    <property type="molecule type" value="mRNA"/>
</dbReference>
<dbReference type="PIR" id="B96600">
    <property type="entry name" value="B96600"/>
</dbReference>
<dbReference type="RefSeq" id="NP_175985.1">
    <property type="nucleotide sequence ID" value="NM_104466.4"/>
</dbReference>
<dbReference type="SMR" id="Q9LG23"/>
<dbReference type="BioGRID" id="27264">
    <property type="interactions" value="6"/>
</dbReference>
<dbReference type="FunCoup" id="Q9LG23">
    <property type="interactions" value="612"/>
</dbReference>
<dbReference type="IntAct" id="Q9LG23">
    <property type="interactions" value="5"/>
</dbReference>
<dbReference type="STRING" id="3702.Q9LG23"/>
<dbReference type="GlyGen" id="Q9LG23">
    <property type="glycosylation" value="1 site"/>
</dbReference>
<dbReference type="iPTMnet" id="Q9LG23"/>
<dbReference type="SwissPalm" id="Q9LG23"/>
<dbReference type="PaxDb" id="3702-AT1G55890.1"/>
<dbReference type="ProteomicsDB" id="234898"/>
<dbReference type="EnsemblPlants" id="AT1G55890.1">
    <property type="protein sequence ID" value="AT1G55890.1"/>
    <property type="gene ID" value="AT1G55890"/>
</dbReference>
<dbReference type="GeneID" id="842039"/>
<dbReference type="Gramene" id="AT1G55890.1">
    <property type="protein sequence ID" value="AT1G55890.1"/>
    <property type="gene ID" value="AT1G55890"/>
</dbReference>
<dbReference type="KEGG" id="ath:AT1G55890"/>
<dbReference type="Araport" id="AT1G55890"/>
<dbReference type="TAIR" id="AT1G55890">
    <property type="gene designation" value="RPPR3A"/>
</dbReference>
<dbReference type="eggNOG" id="KOG4197">
    <property type="taxonomic scope" value="Eukaryota"/>
</dbReference>
<dbReference type="HOGENOM" id="CLU_002706_10_3_1"/>
<dbReference type="InParanoid" id="Q9LG23"/>
<dbReference type="OMA" id="TAIEMCK"/>
<dbReference type="PhylomeDB" id="Q9LG23"/>
<dbReference type="PRO" id="PR:Q9LG23"/>
<dbReference type="Proteomes" id="UP000006548">
    <property type="component" value="Chromosome 1"/>
</dbReference>
<dbReference type="ExpressionAtlas" id="Q9LG23">
    <property type="expression patterns" value="baseline and differential"/>
</dbReference>
<dbReference type="GO" id="GO:0005739">
    <property type="term" value="C:mitochondrion"/>
    <property type="evidence" value="ECO:0007005"/>
    <property type="project" value="TAIR"/>
</dbReference>
<dbReference type="GO" id="GO:1990904">
    <property type="term" value="C:ribonucleoprotein complex"/>
    <property type="evidence" value="ECO:0007669"/>
    <property type="project" value="UniProtKB-KW"/>
</dbReference>
<dbReference type="GO" id="GO:0005840">
    <property type="term" value="C:ribosome"/>
    <property type="evidence" value="ECO:0007669"/>
    <property type="project" value="UniProtKB-KW"/>
</dbReference>
<dbReference type="GO" id="GO:0003729">
    <property type="term" value="F:mRNA binding"/>
    <property type="evidence" value="ECO:0000314"/>
    <property type="project" value="TAIR"/>
</dbReference>
<dbReference type="FunFam" id="1.25.40.10:FF:001070">
    <property type="entry name" value="Pentatricopeptide repeat-containing protein At1g11630, mitochondrial"/>
    <property type="match status" value="1"/>
</dbReference>
<dbReference type="FunFam" id="1.25.40.10:FF:001833">
    <property type="entry name" value="Pentatricopeptide repeat-containing protein At3g13160, mitochondrial"/>
    <property type="match status" value="1"/>
</dbReference>
<dbReference type="Gene3D" id="1.25.40.10">
    <property type="entry name" value="Tetratricopeptide repeat domain"/>
    <property type="match status" value="2"/>
</dbReference>
<dbReference type="InterPro" id="IPR051114">
    <property type="entry name" value="Mito_RNA_Proc_CCM1"/>
</dbReference>
<dbReference type="InterPro" id="IPR002885">
    <property type="entry name" value="Pentatricopeptide_rpt"/>
</dbReference>
<dbReference type="InterPro" id="IPR011990">
    <property type="entry name" value="TPR-like_helical_dom_sf"/>
</dbReference>
<dbReference type="NCBIfam" id="TIGR00756">
    <property type="entry name" value="PPR"/>
    <property type="match status" value="3"/>
</dbReference>
<dbReference type="PANTHER" id="PTHR47934">
    <property type="entry name" value="PENTATRICOPEPTIDE REPEAT-CONTAINING PROTEIN PET309, MITOCHONDRIAL"/>
    <property type="match status" value="1"/>
</dbReference>
<dbReference type="PANTHER" id="PTHR47934:SF26">
    <property type="entry name" value="SMALL RIBOSOMAL SUBUNIT PROTEIN MS78 (RPPR3A)"/>
    <property type="match status" value="1"/>
</dbReference>
<dbReference type="Pfam" id="PF01535">
    <property type="entry name" value="PPR"/>
    <property type="match status" value="2"/>
</dbReference>
<dbReference type="Pfam" id="PF13041">
    <property type="entry name" value="PPR_2"/>
    <property type="match status" value="2"/>
</dbReference>
<dbReference type="PROSITE" id="PS51375">
    <property type="entry name" value="PPR"/>
    <property type="match status" value="7"/>
</dbReference>
<evidence type="ECO:0000255" key="1"/>
<evidence type="ECO:0000269" key="2">
    <source>
    </source>
</evidence>
<evidence type="ECO:0000303" key="3">
    <source>
    </source>
</evidence>
<evidence type="ECO:0000305" key="4"/>
<evidence type="ECO:0000305" key="5">
    <source>
    </source>
</evidence>
<comment type="subunit">
    <text evidence="5">Component of the mitochondrial ribosome small subunit.</text>
</comment>
<comment type="subcellular location">
    <subcellularLocation>
        <location evidence="2 3">Mitochondrion</location>
    </subcellularLocation>
</comment>
<comment type="similarity">
    <text evidence="4">Belongs to the PPR family. P subfamily.</text>
</comment>
<comment type="online information" name="Pentatricopeptide repeat proteins">
    <link uri="https://ppr.plantenergy.uwa.edu.au"/>
</comment>
<name>PPR82_ARATH</name>
<gene>
    <name type="ordered locus">At1g55890</name>
    <name type="ORF">F14J16.14</name>
</gene>
<accession>Q9LG23</accession>
<protein>
    <recommendedName>
        <fullName evidence="3">Small ribosomal subunit protein mS78 (rPPR3a)</fullName>
    </recommendedName>
    <alternativeName>
        <fullName>Pentatricopeptide repeat-containing protein At1g55890, mitochondrial</fullName>
    </alternativeName>
</protein>
<organism>
    <name type="scientific">Arabidopsis thaliana</name>
    <name type="common">Mouse-ear cress</name>
    <dbReference type="NCBI Taxonomy" id="3702"/>
    <lineage>
        <taxon>Eukaryota</taxon>
        <taxon>Viridiplantae</taxon>
        <taxon>Streptophyta</taxon>
        <taxon>Embryophyta</taxon>
        <taxon>Tracheophyta</taxon>
        <taxon>Spermatophyta</taxon>
        <taxon>Magnoliopsida</taxon>
        <taxon>eudicotyledons</taxon>
        <taxon>Gunneridae</taxon>
        <taxon>Pentapetalae</taxon>
        <taxon>rosids</taxon>
        <taxon>malvids</taxon>
        <taxon>Brassicales</taxon>
        <taxon>Brassicaceae</taxon>
        <taxon>Camelineae</taxon>
        <taxon>Arabidopsis</taxon>
    </lineage>
</organism>
<feature type="transit peptide" description="Mitochondrion" evidence="1">
    <location>
        <begin position="1"/>
        <end position="19"/>
    </location>
</feature>
<feature type="chain" id="PRO_0000342823" description="Small ribosomal subunit protein mS78 (rPPR3a)">
    <location>
        <begin position="20"/>
        <end position="398"/>
    </location>
</feature>
<feature type="repeat" description="PPR 1">
    <location>
        <begin position="108"/>
        <end position="142"/>
    </location>
</feature>
<feature type="repeat" description="PPR 2">
    <location>
        <begin position="143"/>
        <end position="173"/>
    </location>
</feature>
<feature type="repeat" description="PPR 3">
    <location>
        <begin position="179"/>
        <end position="213"/>
    </location>
</feature>
<feature type="repeat" description="PPR 4">
    <location>
        <begin position="214"/>
        <end position="248"/>
    </location>
</feature>
<feature type="repeat" description="PPR 5">
    <location>
        <begin position="249"/>
        <end position="283"/>
    </location>
</feature>
<feature type="repeat" description="PPR 6">
    <location>
        <begin position="284"/>
        <end position="318"/>
    </location>
</feature>
<feature type="repeat" description="PPR 7">
    <location>
        <begin position="319"/>
        <end position="353"/>
    </location>
</feature>
<keyword id="KW-0496">Mitochondrion</keyword>
<keyword id="KW-1185">Reference proteome</keyword>
<keyword id="KW-0677">Repeat</keyword>
<keyword id="KW-0687">Ribonucleoprotein</keyword>
<keyword id="KW-0689">Ribosomal protein</keyword>
<keyword id="KW-0809">Transit peptide</keyword>
<proteinExistence type="evidence at protein level"/>
<reference key="1">
    <citation type="journal article" date="2000" name="Nature">
        <title>Sequence and analysis of chromosome 1 of the plant Arabidopsis thaliana.</title>
        <authorList>
            <person name="Theologis A."/>
            <person name="Ecker J.R."/>
            <person name="Palm C.J."/>
            <person name="Federspiel N.A."/>
            <person name="Kaul S."/>
            <person name="White O."/>
            <person name="Alonso J."/>
            <person name="Altafi H."/>
            <person name="Araujo R."/>
            <person name="Bowman C.L."/>
            <person name="Brooks S.Y."/>
            <person name="Buehler E."/>
            <person name="Chan A."/>
            <person name="Chao Q."/>
            <person name="Chen H."/>
            <person name="Cheuk R.F."/>
            <person name="Chin C.W."/>
            <person name="Chung M.K."/>
            <person name="Conn L."/>
            <person name="Conway A.B."/>
            <person name="Conway A.R."/>
            <person name="Creasy T.H."/>
            <person name="Dewar K."/>
            <person name="Dunn P."/>
            <person name="Etgu P."/>
            <person name="Feldblyum T.V."/>
            <person name="Feng J.-D."/>
            <person name="Fong B."/>
            <person name="Fujii C.Y."/>
            <person name="Gill J.E."/>
            <person name="Goldsmith A.D."/>
            <person name="Haas B."/>
            <person name="Hansen N.F."/>
            <person name="Hughes B."/>
            <person name="Huizar L."/>
            <person name="Hunter J.L."/>
            <person name="Jenkins J."/>
            <person name="Johnson-Hopson C."/>
            <person name="Khan S."/>
            <person name="Khaykin E."/>
            <person name="Kim C.J."/>
            <person name="Koo H.L."/>
            <person name="Kremenetskaia I."/>
            <person name="Kurtz D.B."/>
            <person name="Kwan A."/>
            <person name="Lam B."/>
            <person name="Langin-Hooper S."/>
            <person name="Lee A."/>
            <person name="Lee J.M."/>
            <person name="Lenz C.A."/>
            <person name="Li J.H."/>
            <person name="Li Y.-P."/>
            <person name="Lin X."/>
            <person name="Liu S.X."/>
            <person name="Liu Z.A."/>
            <person name="Luros J.S."/>
            <person name="Maiti R."/>
            <person name="Marziali A."/>
            <person name="Militscher J."/>
            <person name="Miranda M."/>
            <person name="Nguyen M."/>
            <person name="Nierman W.C."/>
            <person name="Osborne B.I."/>
            <person name="Pai G."/>
            <person name="Peterson J."/>
            <person name="Pham P.K."/>
            <person name="Rizzo M."/>
            <person name="Rooney T."/>
            <person name="Rowley D."/>
            <person name="Sakano H."/>
            <person name="Salzberg S.L."/>
            <person name="Schwartz J.R."/>
            <person name="Shinn P."/>
            <person name="Southwick A.M."/>
            <person name="Sun H."/>
            <person name="Tallon L.J."/>
            <person name="Tambunga G."/>
            <person name="Toriumi M.J."/>
            <person name="Town C.D."/>
            <person name="Utterback T."/>
            <person name="Van Aken S."/>
            <person name="Vaysberg M."/>
            <person name="Vysotskaia V.S."/>
            <person name="Walker M."/>
            <person name="Wu D."/>
            <person name="Yu G."/>
            <person name="Fraser C.M."/>
            <person name="Venter J.C."/>
            <person name="Davis R.W."/>
        </authorList>
    </citation>
    <scope>NUCLEOTIDE SEQUENCE [LARGE SCALE GENOMIC DNA]</scope>
    <source>
        <strain>cv. Columbia</strain>
    </source>
</reference>
<reference key="2">
    <citation type="journal article" date="2017" name="Plant J.">
        <title>Araport11: a complete reannotation of the Arabidopsis thaliana reference genome.</title>
        <authorList>
            <person name="Cheng C.Y."/>
            <person name="Krishnakumar V."/>
            <person name="Chan A.P."/>
            <person name="Thibaud-Nissen F."/>
            <person name="Schobel S."/>
            <person name="Town C.D."/>
        </authorList>
    </citation>
    <scope>GENOME REANNOTATION</scope>
    <source>
        <strain>cv. Columbia</strain>
    </source>
</reference>
<reference key="3">
    <citation type="journal article" date="2003" name="Science">
        <title>Empirical analysis of transcriptional activity in the Arabidopsis genome.</title>
        <authorList>
            <person name="Yamada K."/>
            <person name="Lim J."/>
            <person name="Dale J.M."/>
            <person name="Chen H."/>
            <person name="Shinn P."/>
            <person name="Palm C.J."/>
            <person name="Southwick A.M."/>
            <person name="Wu H.C."/>
            <person name="Kim C.J."/>
            <person name="Nguyen M."/>
            <person name="Pham P.K."/>
            <person name="Cheuk R.F."/>
            <person name="Karlin-Newmann G."/>
            <person name="Liu S.X."/>
            <person name="Lam B."/>
            <person name="Sakano H."/>
            <person name="Wu T."/>
            <person name="Yu G."/>
            <person name="Miranda M."/>
            <person name="Quach H.L."/>
            <person name="Tripp M."/>
            <person name="Chang C.H."/>
            <person name="Lee J.M."/>
            <person name="Toriumi M.J."/>
            <person name="Chan M.M."/>
            <person name="Tang C.C."/>
            <person name="Onodera C.S."/>
            <person name="Deng J.M."/>
            <person name="Akiyama K."/>
            <person name="Ansari Y."/>
            <person name="Arakawa T."/>
            <person name="Banh J."/>
            <person name="Banno F."/>
            <person name="Bowser L."/>
            <person name="Brooks S.Y."/>
            <person name="Carninci P."/>
            <person name="Chao Q."/>
            <person name="Choy N."/>
            <person name="Enju A."/>
            <person name="Goldsmith A.D."/>
            <person name="Gurjal M."/>
            <person name="Hansen N.F."/>
            <person name="Hayashizaki Y."/>
            <person name="Johnson-Hopson C."/>
            <person name="Hsuan V.W."/>
            <person name="Iida K."/>
            <person name="Karnes M."/>
            <person name="Khan S."/>
            <person name="Koesema E."/>
            <person name="Ishida J."/>
            <person name="Jiang P.X."/>
            <person name="Jones T."/>
            <person name="Kawai J."/>
            <person name="Kamiya A."/>
            <person name="Meyers C."/>
            <person name="Nakajima M."/>
            <person name="Narusaka M."/>
            <person name="Seki M."/>
            <person name="Sakurai T."/>
            <person name="Satou M."/>
            <person name="Tamse R."/>
            <person name="Vaysberg M."/>
            <person name="Wallender E.K."/>
            <person name="Wong C."/>
            <person name="Yamamura Y."/>
            <person name="Yuan S."/>
            <person name="Shinozaki K."/>
            <person name="Davis R.W."/>
            <person name="Theologis A."/>
            <person name="Ecker J.R."/>
        </authorList>
    </citation>
    <scope>NUCLEOTIDE SEQUENCE [LARGE SCALE MRNA]</scope>
    <source>
        <strain>cv. Columbia</strain>
    </source>
</reference>
<reference key="4">
    <citation type="submission" date="2004-10" db="EMBL/GenBank/DDBJ databases">
        <title>Arabidopsis ORF clones.</title>
        <authorList>
            <person name="Kim C.J."/>
            <person name="Chen H."/>
            <person name="Cheuk R.F."/>
            <person name="Shinn P."/>
            <person name="Ecker J.R."/>
        </authorList>
    </citation>
    <scope>NUCLEOTIDE SEQUENCE [LARGE SCALE MRNA]</scope>
    <source>
        <strain>cv. Columbia</strain>
    </source>
</reference>
<reference key="5">
    <citation type="journal article" date="2004" name="Plant Cell">
        <title>Experimental analysis of the Arabidopsis mitochondrial proteome highlights signaling and regulatory components, provides assessment of targeting prediction programs, and indicates plant-specific mitochondrial proteins.</title>
        <authorList>
            <person name="Heazlewood J.L."/>
            <person name="Tonti-Filippini J.S."/>
            <person name="Gout A.M."/>
            <person name="Day D.A."/>
            <person name="Whelan J."/>
            <person name="Millar A.H."/>
        </authorList>
    </citation>
    <scope>IDENTIFICATION BY MASS SPECTROMETRY</scope>
    <scope>SUBCELLULAR LOCATION [LARGE SCALE ANALYSIS]</scope>
    <source>
        <strain>cv. Landsberg erecta</strain>
    </source>
</reference>
<reference key="6">
    <citation type="journal article" date="2004" name="Plant Cell">
        <title>Genome-wide analysis of Arabidopsis pentatricopeptide repeat proteins reveals their essential role in organelle biogenesis.</title>
        <authorList>
            <person name="Lurin C."/>
            <person name="Andres C."/>
            <person name="Aubourg S."/>
            <person name="Bellaoui M."/>
            <person name="Bitton F."/>
            <person name="Bruyere C."/>
            <person name="Caboche M."/>
            <person name="Debast C."/>
            <person name="Gualberto J."/>
            <person name="Hoffmann B."/>
            <person name="Lecharny A."/>
            <person name="Le Ret M."/>
            <person name="Martin-Magniette M.-L."/>
            <person name="Mireau H."/>
            <person name="Peeters N."/>
            <person name="Renou J.-P."/>
            <person name="Szurek B."/>
            <person name="Taconnat L."/>
            <person name="Small I."/>
        </authorList>
    </citation>
    <scope>GENE FAMILY</scope>
</reference>
<reference key="7">
    <citation type="journal article" date="2023" name="Plant Cell">
        <title>An updated nomenclature for plant ribosomal protein genes.</title>
        <authorList>
            <person name="Scarpin M.R."/>
            <person name="Busche M."/>
            <person name="Martinez R.E."/>
            <person name="Harper L.C."/>
            <person name="Reiser L."/>
            <person name="Szakonyi D."/>
            <person name="Merchante C."/>
            <person name="Lan T."/>
            <person name="Xiong W."/>
            <person name="Mo B."/>
            <person name="Tang G."/>
            <person name="Chen X."/>
            <person name="Bailey-Serres J."/>
            <person name="Browning K.S."/>
            <person name="Brunkard J.O."/>
        </authorList>
    </citation>
    <scope>NOMENCLATURE</scope>
</reference>